<organism>
    <name type="scientific">Mesorhizobium japonicum (strain LMG 29417 / CECT 9101 / MAFF 303099)</name>
    <name type="common">Mesorhizobium loti (strain MAFF 303099)</name>
    <dbReference type="NCBI Taxonomy" id="266835"/>
    <lineage>
        <taxon>Bacteria</taxon>
        <taxon>Pseudomonadati</taxon>
        <taxon>Pseudomonadota</taxon>
        <taxon>Alphaproteobacteria</taxon>
        <taxon>Hyphomicrobiales</taxon>
        <taxon>Phyllobacteriaceae</taxon>
        <taxon>Mesorhizobium</taxon>
    </lineage>
</organism>
<reference key="1">
    <citation type="journal article" date="2000" name="DNA Res.">
        <title>Complete genome structure of the nitrogen-fixing symbiotic bacterium Mesorhizobium loti.</title>
        <authorList>
            <person name="Kaneko T."/>
            <person name="Nakamura Y."/>
            <person name="Sato S."/>
            <person name="Asamizu E."/>
            <person name="Kato T."/>
            <person name="Sasamoto S."/>
            <person name="Watanabe A."/>
            <person name="Idesawa K."/>
            <person name="Ishikawa A."/>
            <person name="Kawashima K."/>
            <person name="Kimura T."/>
            <person name="Kishida Y."/>
            <person name="Kiyokawa C."/>
            <person name="Kohara M."/>
            <person name="Matsumoto M."/>
            <person name="Matsuno A."/>
            <person name="Mochizuki Y."/>
            <person name="Nakayama S."/>
            <person name="Nakazaki N."/>
            <person name="Shimpo S."/>
            <person name="Sugimoto M."/>
            <person name="Takeuchi C."/>
            <person name="Yamada M."/>
            <person name="Tabata S."/>
        </authorList>
    </citation>
    <scope>NUCLEOTIDE SEQUENCE [LARGE SCALE GENOMIC DNA]</scope>
    <source>
        <strain>LMG 29417 / CECT 9101 / MAFF 303099</strain>
    </source>
</reference>
<gene>
    <name evidence="1" type="primary">tpiA</name>
    <name type="ordered locus">mll0610</name>
</gene>
<accession>Q98ME7</accession>
<dbReference type="EC" id="5.3.1.1" evidence="1"/>
<dbReference type="EMBL" id="BA000012">
    <property type="protein sequence ID" value="BAB48166.1"/>
    <property type="molecule type" value="Genomic_DNA"/>
</dbReference>
<dbReference type="RefSeq" id="WP_010909521.1">
    <property type="nucleotide sequence ID" value="NC_002678.2"/>
</dbReference>
<dbReference type="SMR" id="Q98ME7"/>
<dbReference type="KEGG" id="mlo:mll0610"/>
<dbReference type="PATRIC" id="fig|266835.9.peg.489"/>
<dbReference type="eggNOG" id="COG0149">
    <property type="taxonomic scope" value="Bacteria"/>
</dbReference>
<dbReference type="HOGENOM" id="CLU_024251_2_1_5"/>
<dbReference type="UniPathway" id="UPA00109">
    <property type="reaction ID" value="UER00189"/>
</dbReference>
<dbReference type="UniPathway" id="UPA00138"/>
<dbReference type="Proteomes" id="UP000000552">
    <property type="component" value="Chromosome"/>
</dbReference>
<dbReference type="GO" id="GO:0005829">
    <property type="term" value="C:cytosol"/>
    <property type="evidence" value="ECO:0007669"/>
    <property type="project" value="TreeGrafter"/>
</dbReference>
<dbReference type="GO" id="GO:0004807">
    <property type="term" value="F:triose-phosphate isomerase activity"/>
    <property type="evidence" value="ECO:0007669"/>
    <property type="project" value="UniProtKB-UniRule"/>
</dbReference>
<dbReference type="GO" id="GO:0006094">
    <property type="term" value="P:gluconeogenesis"/>
    <property type="evidence" value="ECO:0007669"/>
    <property type="project" value="UniProtKB-UniRule"/>
</dbReference>
<dbReference type="GO" id="GO:0046166">
    <property type="term" value="P:glyceraldehyde-3-phosphate biosynthetic process"/>
    <property type="evidence" value="ECO:0007669"/>
    <property type="project" value="TreeGrafter"/>
</dbReference>
<dbReference type="GO" id="GO:0019563">
    <property type="term" value="P:glycerol catabolic process"/>
    <property type="evidence" value="ECO:0007669"/>
    <property type="project" value="TreeGrafter"/>
</dbReference>
<dbReference type="GO" id="GO:0006096">
    <property type="term" value="P:glycolytic process"/>
    <property type="evidence" value="ECO:0007669"/>
    <property type="project" value="UniProtKB-UniRule"/>
</dbReference>
<dbReference type="CDD" id="cd00311">
    <property type="entry name" value="TIM"/>
    <property type="match status" value="1"/>
</dbReference>
<dbReference type="FunFam" id="3.20.20.70:FF:000016">
    <property type="entry name" value="Triosephosphate isomerase"/>
    <property type="match status" value="1"/>
</dbReference>
<dbReference type="Gene3D" id="3.20.20.70">
    <property type="entry name" value="Aldolase class I"/>
    <property type="match status" value="1"/>
</dbReference>
<dbReference type="HAMAP" id="MF_00147_B">
    <property type="entry name" value="TIM_B"/>
    <property type="match status" value="1"/>
</dbReference>
<dbReference type="InterPro" id="IPR013785">
    <property type="entry name" value="Aldolase_TIM"/>
</dbReference>
<dbReference type="InterPro" id="IPR035990">
    <property type="entry name" value="TIM_sf"/>
</dbReference>
<dbReference type="InterPro" id="IPR022896">
    <property type="entry name" value="TrioseP_Isoase_bac/euk"/>
</dbReference>
<dbReference type="InterPro" id="IPR000652">
    <property type="entry name" value="Triosephosphate_isomerase"/>
</dbReference>
<dbReference type="InterPro" id="IPR020861">
    <property type="entry name" value="Triosephosphate_isomerase_AS"/>
</dbReference>
<dbReference type="NCBIfam" id="TIGR00419">
    <property type="entry name" value="tim"/>
    <property type="match status" value="1"/>
</dbReference>
<dbReference type="PANTHER" id="PTHR21139">
    <property type="entry name" value="TRIOSEPHOSPHATE ISOMERASE"/>
    <property type="match status" value="1"/>
</dbReference>
<dbReference type="PANTHER" id="PTHR21139:SF42">
    <property type="entry name" value="TRIOSEPHOSPHATE ISOMERASE"/>
    <property type="match status" value="1"/>
</dbReference>
<dbReference type="Pfam" id="PF00121">
    <property type="entry name" value="TIM"/>
    <property type="match status" value="1"/>
</dbReference>
<dbReference type="SUPFAM" id="SSF51351">
    <property type="entry name" value="Triosephosphate isomerase (TIM)"/>
    <property type="match status" value="1"/>
</dbReference>
<dbReference type="PROSITE" id="PS00171">
    <property type="entry name" value="TIM_1"/>
    <property type="match status" value="1"/>
</dbReference>
<dbReference type="PROSITE" id="PS51440">
    <property type="entry name" value="TIM_2"/>
    <property type="match status" value="1"/>
</dbReference>
<evidence type="ECO:0000255" key="1">
    <source>
        <dbReference type="HAMAP-Rule" id="MF_00147"/>
    </source>
</evidence>
<sequence>MTPGIRPLVAGNWKMNGTSASLNELRMIGNGFMSGLDAETEALVCVPATLLSHAAEILSRTPVHAGGEDCHTKESGAYTGCISAEMLKDAGASHVIVGHSECREQRGEDDATVQAKAAAAWRAGLVAIICIGETQQQREAGATLEVLSRQVAGSVPPSATPSNTVIAYEPVWAIGTGLTPTAADVAEAHAHIRERLSEKLGASAAKTRILYGGSVKPSNAVELLGVRNVDGALVGGASLKAADFLGIAEAYRSISG</sequence>
<proteinExistence type="inferred from homology"/>
<keyword id="KW-0963">Cytoplasm</keyword>
<keyword id="KW-0312">Gluconeogenesis</keyword>
<keyword id="KW-0324">Glycolysis</keyword>
<keyword id="KW-0413">Isomerase</keyword>
<comment type="function">
    <text evidence="1">Involved in the gluconeogenesis. Catalyzes stereospecifically the conversion of dihydroxyacetone phosphate (DHAP) to D-glyceraldehyde-3-phosphate (G3P).</text>
</comment>
<comment type="catalytic activity">
    <reaction evidence="1">
        <text>D-glyceraldehyde 3-phosphate = dihydroxyacetone phosphate</text>
        <dbReference type="Rhea" id="RHEA:18585"/>
        <dbReference type="ChEBI" id="CHEBI:57642"/>
        <dbReference type="ChEBI" id="CHEBI:59776"/>
        <dbReference type="EC" id="5.3.1.1"/>
    </reaction>
</comment>
<comment type="pathway">
    <text evidence="1">Carbohydrate biosynthesis; gluconeogenesis.</text>
</comment>
<comment type="pathway">
    <text evidence="1">Carbohydrate degradation; glycolysis; D-glyceraldehyde 3-phosphate from glycerone phosphate: step 1/1.</text>
</comment>
<comment type="subunit">
    <text evidence="1">Homodimer.</text>
</comment>
<comment type="subcellular location">
    <subcellularLocation>
        <location evidence="1">Cytoplasm</location>
    </subcellularLocation>
</comment>
<comment type="similarity">
    <text evidence="1">Belongs to the triosephosphate isomerase family.</text>
</comment>
<protein>
    <recommendedName>
        <fullName evidence="1">Triosephosphate isomerase</fullName>
        <shortName evidence="1">TIM</shortName>
        <shortName evidence="1">TPI</shortName>
        <ecNumber evidence="1">5.3.1.1</ecNumber>
    </recommendedName>
    <alternativeName>
        <fullName evidence="1">Triose-phosphate isomerase</fullName>
    </alternativeName>
</protein>
<feature type="chain" id="PRO_0000090274" description="Triosephosphate isomerase">
    <location>
        <begin position="1"/>
        <end position="256"/>
    </location>
</feature>
<feature type="active site" description="Electrophile" evidence="1">
    <location>
        <position position="99"/>
    </location>
</feature>
<feature type="active site" description="Proton acceptor" evidence="1">
    <location>
        <position position="169"/>
    </location>
</feature>
<feature type="binding site" evidence="1">
    <location>
        <begin position="12"/>
        <end position="14"/>
    </location>
    <ligand>
        <name>substrate</name>
    </ligand>
</feature>
<feature type="binding site" evidence="1">
    <location>
        <position position="175"/>
    </location>
    <ligand>
        <name>substrate</name>
    </ligand>
</feature>
<feature type="binding site" evidence="1">
    <location>
        <position position="214"/>
    </location>
    <ligand>
        <name>substrate</name>
    </ligand>
</feature>
<feature type="binding site" evidence="1">
    <location>
        <begin position="235"/>
        <end position="236"/>
    </location>
    <ligand>
        <name>substrate</name>
    </ligand>
</feature>
<name>TPIS_RHILO</name>